<organism>
    <name type="scientific">Ectopseudomonas mendocina (strain ymp)</name>
    <name type="common">Pseudomonas mendocina</name>
    <dbReference type="NCBI Taxonomy" id="399739"/>
    <lineage>
        <taxon>Bacteria</taxon>
        <taxon>Pseudomonadati</taxon>
        <taxon>Pseudomonadota</taxon>
        <taxon>Gammaproteobacteria</taxon>
        <taxon>Pseudomonadales</taxon>
        <taxon>Pseudomonadaceae</taxon>
        <taxon>Ectopseudomonas</taxon>
    </lineage>
</organism>
<protein>
    <recommendedName>
        <fullName evidence="1">Pyridoxine 5'-phosphate synthase</fullName>
        <shortName evidence="1">PNP synthase</shortName>
        <ecNumber evidence="1">2.6.99.2</ecNumber>
    </recommendedName>
</protein>
<reference key="1">
    <citation type="submission" date="2007-04" db="EMBL/GenBank/DDBJ databases">
        <title>Complete sequence of Pseudomonas mendocina ymp.</title>
        <authorList>
            <consortium name="US DOE Joint Genome Institute"/>
            <person name="Copeland A."/>
            <person name="Lucas S."/>
            <person name="Lapidus A."/>
            <person name="Barry K."/>
            <person name="Glavina del Rio T."/>
            <person name="Dalin E."/>
            <person name="Tice H."/>
            <person name="Pitluck S."/>
            <person name="Kiss H."/>
            <person name="Brettin T."/>
            <person name="Detter J.C."/>
            <person name="Bruce D."/>
            <person name="Han C."/>
            <person name="Schmutz J."/>
            <person name="Larimer F."/>
            <person name="Land M."/>
            <person name="Hauser L."/>
            <person name="Kyrpides N."/>
            <person name="Mikhailova N."/>
            <person name="Hersman L."/>
            <person name="Dubois J."/>
            <person name="Maurice P."/>
            <person name="Richardson P."/>
        </authorList>
    </citation>
    <scope>NUCLEOTIDE SEQUENCE [LARGE SCALE GENOMIC DNA]</scope>
    <source>
        <strain>ymp</strain>
    </source>
</reference>
<dbReference type="EC" id="2.6.99.2" evidence="1"/>
<dbReference type="EMBL" id="CP000680">
    <property type="protein sequence ID" value="ABP84243.1"/>
    <property type="molecule type" value="Genomic_DNA"/>
</dbReference>
<dbReference type="SMR" id="A4XSC7"/>
<dbReference type="STRING" id="399739.Pmen_1478"/>
<dbReference type="KEGG" id="pmy:Pmen_1478"/>
<dbReference type="PATRIC" id="fig|399739.8.peg.1500"/>
<dbReference type="eggNOG" id="COG0854">
    <property type="taxonomic scope" value="Bacteria"/>
</dbReference>
<dbReference type="HOGENOM" id="CLU_074563_0_0_6"/>
<dbReference type="OrthoDB" id="9806590at2"/>
<dbReference type="UniPathway" id="UPA00244">
    <property type="reaction ID" value="UER00313"/>
</dbReference>
<dbReference type="GO" id="GO:0005829">
    <property type="term" value="C:cytosol"/>
    <property type="evidence" value="ECO:0007669"/>
    <property type="project" value="TreeGrafter"/>
</dbReference>
<dbReference type="GO" id="GO:0033856">
    <property type="term" value="F:pyridoxine 5'-phosphate synthase activity"/>
    <property type="evidence" value="ECO:0007669"/>
    <property type="project" value="UniProtKB-EC"/>
</dbReference>
<dbReference type="GO" id="GO:0008615">
    <property type="term" value="P:pyridoxine biosynthetic process"/>
    <property type="evidence" value="ECO:0007669"/>
    <property type="project" value="UniProtKB-UniRule"/>
</dbReference>
<dbReference type="CDD" id="cd00003">
    <property type="entry name" value="PNPsynthase"/>
    <property type="match status" value="1"/>
</dbReference>
<dbReference type="FunFam" id="3.20.20.70:FF:000042">
    <property type="entry name" value="Pyridoxine 5'-phosphate synthase"/>
    <property type="match status" value="1"/>
</dbReference>
<dbReference type="Gene3D" id="3.20.20.70">
    <property type="entry name" value="Aldolase class I"/>
    <property type="match status" value="1"/>
</dbReference>
<dbReference type="HAMAP" id="MF_00279">
    <property type="entry name" value="PdxJ"/>
    <property type="match status" value="1"/>
</dbReference>
<dbReference type="InterPro" id="IPR013785">
    <property type="entry name" value="Aldolase_TIM"/>
</dbReference>
<dbReference type="InterPro" id="IPR004569">
    <property type="entry name" value="PyrdxlP_synth_PdxJ"/>
</dbReference>
<dbReference type="InterPro" id="IPR036130">
    <property type="entry name" value="Pyridoxine-5'_phos_synth"/>
</dbReference>
<dbReference type="NCBIfam" id="TIGR00559">
    <property type="entry name" value="pdxJ"/>
    <property type="match status" value="1"/>
</dbReference>
<dbReference type="NCBIfam" id="NF003623">
    <property type="entry name" value="PRK05265.1-1"/>
    <property type="match status" value="1"/>
</dbReference>
<dbReference type="NCBIfam" id="NF003625">
    <property type="entry name" value="PRK05265.1-3"/>
    <property type="match status" value="1"/>
</dbReference>
<dbReference type="NCBIfam" id="NF003627">
    <property type="entry name" value="PRK05265.1-5"/>
    <property type="match status" value="1"/>
</dbReference>
<dbReference type="PANTHER" id="PTHR30456">
    <property type="entry name" value="PYRIDOXINE 5'-PHOSPHATE SYNTHASE"/>
    <property type="match status" value="1"/>
</dbReference>
<dbReference type="PANTHER" id="PTHR30456:SF0">
    <property type="entry name" value="PYRIDOXINE 5'-PHOSPHATE SYNTHASE"/>
    <property type="match status" value="1"/>
</dbReference>
<dbReference type="Pfam" id="PF03740">
    <property type="entry name" value="PdxJ"/>
    <property type="match status" value="1"/>
</dbReference>
<dbReference type="SUPFAM" id="SSF63892">
    <property type="entry name" value="Pyridoxine 5'-phosphate synthase"/>
    <property type="match status" value="1"/>
</dbReference>
<gene>
    <name evidence="1" type="primary">pdxJ</name>
    <name type="ordered locus">Pmen_1478</name>
</gene>
<accession>A4XSC7</accession>
<comment type="function">
    <text evidence="1">Catalyzes the complicated ring closure reaction between the two acyclic compounds 1-deoxy-D-xylulose-5-phosphate (DXP) and 3-amino-2-oxopropyl phosphate (1-amino-acetone-3-phosphate or AAP) to form pyridoxine 5'-phosphate (PNP) and inorganic phosphate.</text>
</comment>
<comment type="catalytic activity">
    <reaction evidence="1">
        <text>3-amino-2-oxopropyl phosphate + 1-deoxy-D-xylulose 5-phosphate = pyridoxine 5'-phosphate + phosphate + 2 H2O + H(+)</text>
        <dbReference type="Rhea" id="RHEA:15265"/>
        <dbReference type="ChEBI" id="CHEBI:15377"/>
        <dbReference type="ChEBI" id="CHEBI:15378"/>
        <dbReference type="ChEBI" id="CHEBI:43474"/>
        <dbReference type="ChEBI" id="CHEBI:57279"/>
        <dbReference type="ChEBI" id="CHEBI:57792"/>
        <dbReference type="ChEBI" id="CHEBI:58589"/>
        <dbReference type="EC" id="2.6.99.2"/>
    </reaction>
</comment>
<comment type="pathway">
    <text evidence="1">Cofactor biosynthesis; pyridoxine 5'-phosphate biosynthesis; pyridoxine 5'-phosphate from D-erythrose 4-phosphate: step 5/5.</text>
</comment>
<comment type="subunit">
    <text evidence="1">Homooctamer; tetramer of dimers.</text>
</comment>
<comment type="subcellular location">
    <subcellularLocation>
        <location evidence="1">Cytoplasm</location>
    </subcellularLocation>
</comment>
<comment type="similarity">
    <text evidence="1">Belongs to the PNP synthase family.</text>
</comment>
<proteinExistence type="inferred from homology"/>
<sequence>MTEANRILLGVNIDHVATLRQARGTRYPDPVKAALDAEEAGADGITVHLREDRRHIQDRDVRVLADVLQTRMNFEMGVTDFMLGFAEQIRPAHVCLVPETRQELTTEGGLDVAGQEARIAAAVERLTLAGCEVSLFIDAEERQIEAAMRVGAPAIELHTGRYADAHTAEEAAQELSRIRDGVICGLNHGLIVNAGHGLHYHNAEAVAAIPGINELNIGHAIVAHALFVGFKQAVAEMKALIVAAAYRG</sequence>
<evidence type="ECO:0000255" key="1">
    <source>
        <dbReference type="HAMAP-Rule" id="MF_00279"/>
    </source>
</evidence>
<keyword id="KW-0963">Cytoplasm</keyword>
<keyword id="KW-0664">Pyridoxine biosynthesis</keyword>
<keyword id="KW-0808">Transferase</keyword>
<name>PDXJ_ECTM1</name>
<feature type="chain" id="PRO_1000022393" description="Pyridoxine 5'-phosphate synthase">
    <location>
        <begin position="1"/>
        <end position="248"/>
    </location>
</feature>
<feature type="active site" description="Proton acceptor" evidence="1">
    <location>
        <position position="48"/>
    </location>
</feature>
<feature type="active site" description="Proton acceptor" evidence="1">
    <location>
        <position position="75"/>
    </location>
</feature>
<feature type="active site" description="Proton donor" evidence="1">
    <location>
        <position position="196"/>
    </location>
</feature>
<feature type="binding site" evidence="1">
    <location>
        <position position="12"/>
    </location>
    <ligand>
        <name>3-amino-2-oxopropyl phosphate</name>
        <dbReference type="ChEBI" id="CHEBI:57279"/>
    </ligand>
</feature>
<feature type="binding site" evidence="1">
    <location>
        <begin position="14"/>
        <end position="15"/>
    </location>
    <ligand>
        <name>1-deoxy-D-xylulose 5-phosphate</name>
        <dbReference type="ChEBI" id="CHEBI:57792"/>
    </ligand>
</feature>
<feature type="binding site" evidence="1">
    <location>
        <position position="23"/>
    </location>
    <ligand>
        <name>3-amino-2-oxopropyl phosphate</name>
        <dbReference type="ChEBI" id="CHEBI:57279"/>
    </ligand>
</feature>
<feature type="binding site" evidence="1">
    <location>
        <position position="50"/>
    </location>
    <ligand>
        <name>1-deoxy-D-xylulose 5-phosphate</name>
        <dbReference type="ChEBI" id="CHEBI:57792"/>
    </ligand>
</feature>
<feature type="binding site" evidence="1">
    <location>
        <position position="55"/>
    </location>
    <ligand>
        <name>1-deoxy-D-xylulose 5-phosphate</name>
        <dbReference type="ChEBI" id="CHEBI:57792"/>
    </ligand>
</feature>
<feature type="binding site" evidence="1">
    <location>
        <position position="105"/>
    </location>
    <ligand>
        <name>1-deoxy-D-xylulose 5-phosphate</name>
        <dbReference type="ChEBI" id="CHEBI:57792"/>
    </ligand>
</feature>
<feature type="binding site" evidence="1">
    <location>
        <position position="197"/>
    </location>
    <ligand>
        <name>3-amino-2-oxopropyl phosphate</name>
        <dbReference type="ChEBI" id="CHEBI:57279"/>
    </ligand>
</feature>
<feature type="binding site" evidence="1">
    <location>
        <begin position="218"/>
        <end position="219"/>
    </location>
    <ligand>
        <name>3-amino-2-oxopropyl phosphate</name>
        <dbReference type="ChEBI" id="CHEBI:57279"/>
    </ligand>
</feature>
<feature type="site" description="Transition state stabilizer" evidence="1">
    <location>
        <position position="156"/>
    </location>
</feature>